<gene>
    <name evidence="1" type="primary">rplB</name>
    <name type="ordered locus">LSL_1432</name>
</gene>
<keyword id="KW-1185">Reference proteome</keyword>
<keyword id="KW-0687">Ribonucleoprotein</keyword>
<keyword id="KW-0689">Ribosomal protein</keyword>
<keyword id="KW-0694">RNA-binding</keyword>
<keyword id="KW-0699">rRNA-binding</keyword>
<comment type="function">
    <text evidence="1">One of the primary rRNA binding proteins. Required for association of the 30S and 50S subunits to form the 70S ribosome, for tRNA binding and peptide bond formation. It has been suggested to have peptidyltransferase activity; this is somewhat controversial. Makes several contacts with the 16S rRNA in the 70S ribosome.</text>
</comment>
<comment type="subunit">
    <text evidence="1">Part of the 50S ribosomal subunit. Forms a bridge to the 30S subunit in the 70S ribosome.</text>
</comment>
<comment type="similarity">
    <text evidence="1">Belongs to the universal ribosomal protein uL2 family.</text>
</comment>
<name>RL2_LIGS1</name>
<dbReference type="EMBL" id="CP000233">
    <property type="protein sequence ID" value="ABE00236.1"/>
    <property type="molecule type" value="Genomic_DNA"/>
</dbReference>
<dbReference type="RefSeq" id="WP_003701306.1">
    <property type="nucleotide sequence ID" value="NC_007929.1"/>
</dbReference>
<dbReference type="RefSeq" id="YP_536319.1">
    <property type="nucleotide sequence ID" value="NC_007929.1"/>
</dbReference>
<dbReference type="SMR" id="Q1WS93"/>
<dbReference type="STRING" id="362948.LSL_1432"/>
<dbReference type="GeneID" id="89466167"/>
<dbReference type="KEGG" id="lsl:LSL_1432"/>
<dbReference type="PATRIC" id="fig|362948.14.peg.1515"/>
<dbReference type="HOGENOM" id="CLU_036235_2_1_9"/>
<dbReference type="OrthoDB" id="9778722at2"/>
<dbReference type="Proteomes" id="UP000006559">
    <property type="component" value="Chromosome"/>
</dbReference>
<dbReference type="GO" id="GO:0015934">
    <property type="term" value="C:large ribosomal subunit"/>
    <property type="evidence" value="ECO:0007669"/>
    <property type="project" value="InterPro"/>
</dbReference>
<dbReference type="GO" id="GO:0019843">
    <property type="term" value="F:rRNA binding"/>
    <property type="evidence" value="ECO:0007669"/>
    <property type="project" value="UniProtKB-UniRule"/>
</dbReference>
<dbReference type="GO" id="GO:0003735">
    <property type="term" value="F:structural constituent of ribosome"/>
    <property type="evidence" value="ECO:0007669"/>
    <property type="project" value="InterPro"/>
</dbReference>
<dbReference type="GO" id="GO:0016740">
    <property type="term" value="F:transferase activity"/>
    <property type="evidence" value="ECO:0007669"/>
    <property type="project" value="InterPro"/>
</dbReference>
<dbReference type="GO" id="GO:0002181">
    <property type="term" value="P:cytoplasmic translation"/>
    <property type="evidence" value="ECO:0007669"/>
    <property type="project" value="TreeGrafter"/>
</dbReference>
<dbReference type="FunFam" id="2.30.30.30:FF:000001">
    <property type="entry name" value="50S ribosomal protein L2"/>
    <property type="match status" value="1"/>
</dbReference>
<dbReference type="FunFam" id="2.40.50.140:FF:000003">
    <property type="entry name" value="50S ribosomal protein L2"/>
    <property type="match status" value="1"/>
</dbReference>
<dbReference type="FunFam" id="4.10.950.10:FF:000001">
    <property type="entry name" value="50S ribosomal protein L2"/>
    <property type="match status" value="1"/>
</dbReference>
<dbReference type="Gene3D" id="2.30.30.30">
    <property type="match status" value="1"/>
</dbReference>
<dbReference type="Gene3D" id="2.40.50.140">
    <property type="entry name" value="Nucleic acid-binding proteins"/>
    <property type="match status" value="1"/>
</dbReference>
<dbReference type="Gene3D" id="4.10.950.10">
    <property type="entry name" value="Ribosomal protein L2, domain 3"/>
    <property type="match status" value="1"/>
</dbReference>
<dbReference type="HAMAP" id="MF_01320_B">
    <property type="entry name" value="Ribosomal_uL2_B"/>
    <property type="match status" value="1"/>
</dbReference>
<dbReference type="InterPro" id="IPR012340">
    <property type="entry name" value="NA-bd_OB-fold"/>
</dbReference>
<dbReference type="InterPro" id="IPR014722">
    <property type="entry name" value="Rib_uL2_dom2"/>
</dbReference>
<dbReference type="InterPro" id="IPR002171">
    <property type="entry name" value="Ribosomal_uL2"/>
</dbReference>
<dbReference type="InterPro" id="IPR005880">
    <property type="entry name" value="Ribosomal_uL2_bac/org-type"/>
</dbReference>
<dbReference type="InterPro" id="IPR022669">
    <property type="entry name" value="Ribosomal_uL2_C"/>
</dbReference>
<dbReference type="InterPro" id="IPR022671">
    <property type="entry name" value="Ribosomal_uL2_CS"/>
</dbReference>
<dbReference type="InterPro" id="IPR014726">
    <property type="entry name" value="Ribosomal_uL2_dom3"/>
</dbReference>
<dbReference type="InterPro" id="IPR022666">
    <property type="entry name" value="Ribosomal_uL2_RNA-bd_dom"/>
</dbReference>
<dbReference type="InterPro" id="IPR008991">
    <property type="entry name" value="Translation_prot_SH3-like_sf"/>
</dbReference>
<dbReference type="NCBIfam" id="TIGR01171">
    <property type="entry name" value="rplB_bact"/>
    <property type="match status" value="1"/>
</dbReference>
<dbReference type="PANTHER" id="PTHR13691:SF5">
    <property type="entry name" value="LARGE RIBOSOMAL SUBUNIT PROTEIN UL2M"/>
    <property type="match status" value="1"/>
</dbReference>
<dbReference type="PANTHER" id="PTHR13691">
    <property type="entry name" value="RIBOSOMAL PROTEIN L2"/>
    <property type="match status" value="1"/>
</dbReference>
<dbReference type="Pfam" id="PF00181">
    <property type="entry name" value="Ribosomal_L2"/>
    <property type="match status" value="1"/>
</dbReference>
<dbReference type="Pfam" id="PF03947">
    <property type="entry name" value="Ribosomal_L2_C"/>
    <property type="match status" value="1"/>
</dbReference>
<dbReference type="PIRSF" id="PIRSF002158">
    <property type="entry name" value="Ribosomal_L2"/>
    <property type="match status" value="1"/>
</dbReference>
<dbReference type="SMART" id="SM01383">
    <property type="entry name" value="Ribosomal_L2"/>
    <property type="match status" value="1"/>
</dbReference>
<dbReference type="SMART" id="SM01382">
    <property type="entry name" value="Ribosomal_L2_C"/>
    <property type="match status" value="1"/>
</dbReference>
<dbReference type="SUPFAM" id="SSF50249">
    <property type="entry name" value="Nucleic acid-binding proteins"/>
    <property type="match status" value="1"/>
</dbReference>
<dbReference type="SUPFAM" id="SSF50104">
    <property type="entry name" value="Translation proteins SH3-like domain"/>
    <property type="match status" value="1"/>
</dbReference>
<dbReference type="PROSITE" id="PS00467">
    <property type="entry name" value="RIBOSOMAL_L2"/>
    <property type="match status" value="1"/>
</dbReference>
<organism>
    <name type="scientific">Ligilactobacillus salivarius (strain UCC118)</name>
    <name type="common">Lactobacillus salivarius</name>
    <dbReference type="NCBI Taxonomy" id="362948"/>
    <lineage>
        <taxon>Bacteria</taxon>
        <taxon>Bacillati</taxon>
        <taxon>Bacillota</taxon>
        <taxon>Bacilli</taxon>
        <taxon>Lactobacillales</taxon>
        <taxon>Lactobacillaceae</taxon>
        <taxon>Ligilactobacillus</taxon>
    </lineage>
</organism>
<proteinExistence type="inferred from homology"/>
<protein>
    <recommendedName>
        <fullName evidence="1">Large ribosomal subunit protein uL2</fullName>
    </recommendedName>
    <alternativeName>
        <fullName evidence="3">50S ribosomal protein L2</fullName>
    </alternativeName>
</protein>
<reference key="1">
    <citation type="journal article" date="2006" name="Proc. Natl. Acad. Sci. U.S.A.">
        <title>Multireplicon genome architecture of Lactobacillus salivarius.</title>
        <authorList>
            <person name="Claesson M.J."/>
            <person name="Li Y."/>
            <person name="Leahy S."/>
            <person name="Canchaya C."/>
            <person name="van Pijkeren J.P."/>
            <person name="Cerdeno-Tarraga A.M."/>
            <person name="Parkhill J."/>
            <person name="Flynn S."/>
            <person name="O'Sullivan G.C."/>
            <person name="Collins J.K."/>
            <person name="Higgins D."/>
            <person name="Shanahan F."/>
            <person name="Fitzgerald G.F."/>
            <person name="van Sinderen D."/>
            <person name="O'Toole P.W."/>
        </authorList>
    </citation>
    <scope>NUCLEOTIDE SEQUENCE [LARGE SCALE GENOMIC DNA]</scope>
    <source>
        <strain>UCC118</strain>
    </source>
</reference>
<evidence type="ECO:0000255" key="1">
    <source>
        <dbReference type="HAMAP-Rule" id="MF_01320"/>
    </source>
</evidence>
<evidence type="ECO:0000256" key="2">
    <source>
        <dbReference type="SAM" id="MobiDB-lite"/>
    </source>
</evidence>
<evidence type="ECO:0000305" key="3"/>
<feature type="chain" id="PRO_0000309941" description="Large ribosomal subunit protein uL2">
    <location>
        <begin position="1"/>
        <end position="277"/>
    </location>
</feature>
<feature type="region of interest" description="Disordered" evidence="2">
    <location>
        <begin position="210"/>
        <end position="277"/>
    </location>
</feature>
<feature type="compositionally biased region" description="Basic residues" evidence="2">
    <location>
        <begin position="210"/>
        <end position="219"/>
    </location>
</feature>
<feature type="compositionally biased region" description="Basic residues" evidence="2">
    <location>
        <begin position="259"/>
        <end position="277"/>
    </location>
</feature>
<sequence length="277" mass="29986">MGIKKFKPTTNGRRNMTGSDFAEITKTKPEKSLLVSKSKTAGRNAYGRITVRHRGGGHKRKYRLIDFKRVKDNVPATVKAIEYDPNRSANIALLVYADGVKSYILAPKGLKVGQVVESGKDVDIKVGNTLPLANIPVGTVIHNIELKPGKGGQLVRSAGTSAQLLGKEGKYAIIRLTSGEVRMILVTCRATIGAVGNEQHELIKVGKAGRARWAGKRPQSRGSVMNPNDHPHGGGEGKAPVGRPSPMSPWGKKTTGLKTRSKKARSNKFIVRSRNKK</sequence>
<accession>Q1WS93</accession>